<accession>Q5F569</accession>
<sequence length="307" mass="33921">MLQRTLAKSIGVTGVGLHSGERVALTLHPAPENSGISFRRTDLDGEMGEQIKLNPYLINDTRLSSTIVTDKGLRVGTIEHIMSALSAYGIDNALIELNAPEIPIMDGSSLPFIYLLQDAGVVDQKAQKRFLKILKPVEIKEAGKWVRFTPYDGFKVTLTIEFDHPVFNRSPPTFEIDFAGKSYIGEIARARTFGFMHEVEMMRAHNLGLGGNLNNAIVIGDTDVLNPEGLRYPDEFVRHKILDAIGDLYIVGHPIVGAFEGYKSGHAVNNALLRAVLADETAYEWVEFADSDDLPDAFHELNIRNCG</sequence>
<feature type="chain" id="PRO_0000191939" description="UDP-3-O-acyl-N-acetylglucosamine deacetylase">
    <location>
        <begin position="1"/>
        <end position="307"/>
    </location>
</feature>
<feature type="active site" description="Proton donor" evidence="1">
    <location>
        <position position="266"/>
    </location>
</feature>
<feature type="binding site" evidence="1">
    <location>
        <position position="80"/>
    </location>
    <ligand>
        <name>Zn(2+)</name>
        <dbReference type="ChEBI" id="CHEBI:29105"/>
    </ligand>
</feature>
<feature type="binding site" evidence="1">
    <location>
        <position position="239"/>
    </location>
    <ligand>
        <name>Zn(2+)</name>
        <dbReference type="ChEBI" id="CHEBI:29105"/>
    </ligand>
</feature>
<feature type="binding site" evidence="1">
    <location>
        <position position="243"/>
    </location>
    <ligand>
        <name>Zn(2+)</name>
        <dbReference type="ChEBI" id="CHEBI:29105"/>
    </ligand>
</feature>
<name>LPXC_NEIG1</name>
<keyword id="KW-0378">Hydrolase</keyword>
<keyword id="KW-0441">Lipid A biosynthesis</keyword>
<keyword id="KW-0444">Lipid biosynthesis</keyword>
<keyword id="KW-0443">Lipid metabolism</keyword>
<keyword id="KW-0479">Metal-binding</keyword>
<keyword id="KW-1185">Reference proteome</keyword>
<keyword id="KW-0862">Zinc</keyword>
<reference key="1">
    <citation type="submission" date="2003-03" db="EMBL/GenBank/DDBJ databases">
        <title>The complete genome sequence of Neisseria gonorrhoeae.</title>
        <authorList>
            <person name="Lewis L.A."/>
            <person name="Gillaspy A.F."/>
            <person name="McLaughlin R.E."/>
            <person name="Gipson M."/>
            <person name="Ducey T.F."/>
            <person name="Ownbey T."/>
            <person name="Hartman K."/>
            <person name="Nydick C."/>
            <person name="Carson M.B."/>
            <person name="Vaughn J."/>
            <person name="Thomson C."/>
            <person name="Song L."/>
            <person name="Lin S."/>
            <person name="Yuan X."/>
            <person name="Najar F."/>
            <person name="Zhan M."/>
            <person name="Ren Q."/>
            <person name="Zhu H."/>
            <person name="Qi S."/>
            <person name="Kenton S.M."/>
            <person name="Lai H."/>
            <person name="White J.D."/>
            <person name="Clifton S."/>
            <person name="Roe B.A."/>
            <person name="Dyer D.W."/>
        </authorList>
    </citation>
    <scope>NUCLEOTIDE SEQUENCE [LARGE SCALE GENOMIC DNA]</scope>
    <source>
        <strain>ATCC 700825 / FA 1090</strain>
    </source>
</reference>
<organism>
    <name type="scientific">Neisseria gonorrhoeae (strain ATCC 700825 / FA 1090)</name>
    <dbReference type="NCBI Taxonomy" id="242231"/>
    <lineage>
        <taxon>Bacteria</taxon>
        <taxon>Pseudomonadati</taxon>
        <taxon>Pseudomonadota</taxon>
        <taxon>Betaproteobacteria</taxon>
        <taxon>Neisseriales</taxon>
        <taxon>Neisseriaceae</taxon>
        <taxon>Neisseria</taxon>
    </lineage>
</organism>
<protein>
    <recommendedName>
        <fullName evidence="1">UDP-3-O-acyl-N-acetylglucosamine deacetylase</fullName>
        <shortName evidence="1">UDP-3-O-acyl-GlcNAc deacetylase</shortName>
        <ecNumber evidence="1">3.5.1.108</ecNumber>
    </recommendedName>
    <alternativeName>
        <fullName evidence="1">UDP-3-O-[R-3-hydroxymyristoyl]-N-acetylglucosamine deacetylase</fullName>
    </alternativeName>
</protein>
<proteinExistence type="inferred from homology"/>
<gene>
    <name evidence="1" type="primary">lpxC</name>
    <name type="ordered locus">NGO_2065</name>
</gene>
<evidence type="ECO:0000255" key="1">
    <source>
        <dbReference type="HAMAP-Rule" id="MF_00388"/>
    </source>
</evidence>
<comment type="function">
    <text evidence="1">Catalyzes the hydrolysis of UDP-3-O-myristoyl-N-acetylglucosamine to form UDP-3-O-myristoylglucosamine and acetate, the committed step in lipid A biosynthesis.</text>
</comment>
<comment type="catalytic activity">
    <reaction evidence="1">
        <text>a UDP-3-O-[(3R)-3-hydroxyacyl]-N-acetyl-alpha-D-glucosamine + H2O = a UDP-3-O-[(3R)-3-hydroxyacyl]-alpha-D-glucosamine + acetate</text>
        <dbReference type="Rhea" id="RHEA:67816"/>
        <dbReference type="ChEBI" id="CHEBI:15377"/>
        <dbReference type="ChEBI" id="CHEBI:30089"/>
        <dbReference type="ChEBI" id="CHEBI:137740"/>
        <dbReference type="ChEBI" id="CHEBI:173225"/>
        <dbReference type="EC" id="3.5.1.108"/>
    </reaction>
</comment>
<comment type="cofactor">
    <cofactor evidence="1">
        <name>Zn(2+)</name>
        <dbReference type="ChEBI" id="CHEBI:29105"/>
    </cofactor>
</comment>
<comment type="pathway">
    <text evidence="1">Glycolipid biosynthesis; lipid IV(A) biosynthesis; lipid IV(A) from (3R)-3-hydroxytetradecanoyl-[acyl-carrier-protein] and UDP-N-acetyl-alpha-D-glucosamine: step 2/6.</text>
</comment>
<comment type="similarity">
    <text evidence="1">Belongs to the LpxC family.</text>
</comment>
<dbReference type="EC" id="3.5.1.108" evidence="1"/>
<dbReference type="EMBL" id="AE004969">
    <property type="protein sequence ID" value="AAW90668.1"/>
    <property type="molecule type" value="Genomic_DNA"/>
</dbReference>
<dbReference type="RefSeq" id="WP_003687007.1">
    <property type="nucleotide sequence ID" value="NC_002946.2"/>
</dbReference>
<dbReference type="RefSeq" id="YP_209080.1">
    <property type="nucleotide sequence ID" value="NC_002946.2"/>
</dbReference>
<dbReference type="SMR" id="Q5F569"/>
<dbReference type="STRING" id="242231.NGO_2065"/>
<dbReference type="GeneID" id="66753716"/>
<dbReference type="KEGG" id="ngo:NGO_2065"/>
<dbReference type="PATRIC" id="fig|242231.10.peg.2494"/>
<dbReference type="HOGENOM" id="CLU_046528_1_0_4"/>
<dbReference type="UniPathway" id="UPA00359">
    <property type="reaction ID" value="UER00478"/>
</dbReference>
<dbReference type="Proteomes" id="UP000000535">
    <property type="component" value="Chromosome"/>
</dbReference>
<dbReference type="GO" id="GO:0016020">
    <property type="term" value="C:membrane"/>
    <property type="evidence" value="ECO:0007669"/>
    <property type="project" value="GOC"/>
</dbReference>
<dbReference type="GO" id="GO:0046872">
    <property type="term" value="F:metal ion binding"/>
    <property type="evidence" value="ECO:0007669"/>
    <property type="project" value="UniProtKB-KW"/>
</dbReference>
<dbReference type="GO" id="GO:0103117">
    <property type="term" value="F:UDP-3-O-acyl-N-acetylglucosamine deacetylase activity"/>
    <property type="evidence" value="ECO:0007669"/>
    <property type="project" value="UniProtKB-UniRule"/>
</dbReference>
<dbReference type="GO" id="GO:0009245">
    <property type="term" value="P:lipid A biosynthetic process"/>
    <property type="evidence" value="ECO:0007669"/>
    <property type="project" value="UniProtKB-UniRule"/>
</dbReference>
<dbReference type="Gene3D" id="3.30.230.20">
    <property type="entry name" value="lpxc deacetylase, domain 1"/>
    <property type="match status" value="1"/>
</dbReference>
<dbReference type="Gene3D" id="3.30.1700.10">
    <property type="entry name" value="lpxc deacetylase, domain 2"/>
    <property type="match status" value="1"/>
</dbReference>
<dbReference type="HAMAP" id="MF_00388">
    <property type="entry name" value="LpxC"/>
    <property type="match status" value="1"/>
</dbReference>
<dbReference type="InterPro" id="IPR020568">
    <property type="entry name" value="Ribosomal_Su5_D2-typ_SF"/>
</dbReference>
<dbReference type="InterPro" id="IPR004463">
    <property type="entry name" value="UDP-acyl_GlcNac_deAcase"/>
</dbReference>
<dbReference type="InterPro" id="IPR011334">
    <property type="entry name" value="UDP-acyl_GlcNac_deAcase_C"/>
</dbReference>
<dbReference type="InterPro" id="IPR015870">
    <property type="entry name" value="UDP-acyl_N-AcGlcN_deAcase_N"/>
</dbReference>
<dbReference type="NCBIfam" id="TIGR00325">
    <property type="entry name" value="lpxC"/>
    <property type="match status" value="1"/>
</dbReference>
<dbReference type="PANTHER" id="PTHR33694">
    <property type="entry name" value="UDP-3-O-ACYL-N-ACETYLGLUCOSAMINE DEACETYLASE 1, MITOCHONDRIAL-RELATED"/>
    <property type="match status" value="1"/>
</dbReference>
<dbReference type="PANTHER" id="PTHR33694:SF1">
    <property type="entry name" value="UDP-3-O-ACYL-N-ACETYLGLUCOSAMINE DEACETYLASE 1, MITOCHONDRIAL-RELATED"/>
    <property type="match status" value="1"/>
</dbReference>
<dbReference type="Pfam" id="PF03331">
    <property type="entry name" value="LpxC"/>
    <property type="match status" value="1"/>
</dbReference>
<dbReference type="SUPFAM" id="SSF54211">
    <property type="entry name" value="Ribosomal protein S5 domain 2-like"/>
    <property type="match status" value="2"/>
</dbReference>